<accession>A5UMJ1</accession>
<proteinExistence type="inferred from homology"/>
<name>SYT_METS3</name>
<organism>
    <name type="scientific">Methanobrevibacter smithii (strain ATCC 35061 / DSM 861 / OCM 144 / PS)</name>
    <dbReference type="NCBI Taxonomy" id="420247"/>
    <lineage>
        <taxon>Archaea</taxon>
        <taxon>Methanobacteriati</taxon>
        <taxon>Methanobacteriota</taxon>
        <taxon>Methanomada group</taxon>
        <taxon>Methanobacteria</taxon>
        <taxon>Methanobacteriales</taxon>
        <taxon>Methanobacteriaceae</taxon>
        <taxon>Methanobrevibacter</taxon>
    </lineage>
</organism>
<evidence type="ECO:0000255" key="1">
    <source>
        <dbReference type="HAMAP-Rule" id="MF_00184"/>
    </source>
</evidence>
<dbReference type="EC" id="6.1.1.3" evidence="1"/>
<dbReference type="EMBL" id="CP000678">
    <property type="protein sequence ID" value="ABQ87419.1"/>
    <property type="molecule type" value="Genomic_DNA"/>
</dbReference>
<dbReference type="RefSeq" id="WP_011954362.1">
    <property type="nucleotide sequence ID" value="NZ_CP117965.1"/>
</dbReference>
<dbReference type="SMR" id="A5UMJ1"/>
<dbReference type="STRING" id="420247.Msm_1214"/>
<dbReference type="EnsemblBacteria" id="ABQ87419">
    <property type="protein sequence ID" value="ABQ87419"/>
    <property type="gene ID" value="Msm_1214"/>
</dbReference>
<dbReference type="KEGG" id="msi:Msm_1214"/>
<dbReference type="PATRIC" id="fig|420247.28.peg.1213"/>
<dbReference type="eggNOG" id="arCOG00401">
    <property type="taxonomic scope" value="Archaea"/>
</dbReference>
<dbReference type="HOGENOM" id="CLU_029833_0_0_2"/>
<dbReference type="Proteomes" id="UP000001992">
    <property type="component" value="Chromosome"/>
</dbReference>
<dbReference type="GO" id="GO:0005737">
    <property type="term" value="C:cytoplasm"/>
    <property type="evidence" value="ECO:0007669"/>
    <property type="project" value="UniProtKB-SubCell"/>
</dbReference>
<dbReference type="GO" id="GO:0005524">
    <property type="term" value="F:ATP binding"/>
    <property type="evidence" value="ECO:0007669"/>
    <property type="project" value="UniProtKB-UniRule"/>
</dbReference>
<dbReference type="GO" id="GO:0004829">
    <property type="term" value="F:threonine-tRNA ligase activity"/>
    <property type="evidence" value="ECO:0007669"/>
    <property type="project" value="UniProtKB-UniRule"/>
</dbReference>
<dbReference type="GO" id="GO:0000049">
    <property type="term" value="F:tRNA binding"/>
    <property type="evidence" value="ECO:0007669"/>
    <property type="project" value="UniProtKB-KW"/>
</dbReference>
<dbReference type="GO" id="GO:0008270">
    <property type="term" value="F:zinc ion binding"/>
    <property type="evidence" value="ECO:0007669"/>
    <property type="project" value="InterPro"/>
</dbReference>
<dbReference type="GO" id="GO:0006435">
    <property type="term" value="P:threonyl-tRNA aminoacylation"/>
    <property type="evidence" value="ECO:0007669"/>
    <property type="project" value="UniProtKB-UniRule"/>
</dbReference>
<dbReference type="CDD" id="cd00860">
    <property type="entry name" value="ThrRS_anticodon"/>
    <property type="match status" value="1"/>
</dbReference>
<dbReference type="FunFam" id="3.40.50.800:FF:000001">
    <property type="entry name" value="Threonine--tRNA ligase"/>
    <property type="match status" value="1"/>
</dbReference>
<dbReference type="FunFam" id="3.50.80.10:FF:000004">
    <property type="entry name" value="Threonine--tRNA ligase"/>
    <property type="match status" value="1"/>
</dbReference>
<dbReference type="Gene3D" id="3.40.50.800">
    <property type="entry name" value="Anticodon-binding domain"/>
    <property type="match status" value="1"/>
</dbReference>
<dbReference type="Gene3D" id="3.30.930.10">
    <property type="entry name" value="Bira Bifunctional Protein, Domain 2"/>
    <property type="match status" value="1"/>
</dbReference>
<dbReference type="Gene3D" id="3.50.80.10">
    <property type="entry name" value="D-tyrosyl-tRNA(Tyr) deacylase"/>
    <property type="match status" value="1"/>
</dbReference>
<dbReference type="HAMAP" id="MF_00184">
    <property type="entry name" value="Thr_tRNA_synth"/>
    <property type="match status" value="1"/>
</dbReference>
<dbReference type="InterPro" id="IPR002314">
    <property type="entry name" value="aa-tRNA-synt_IIb"/>
</dbReference>
<dbReference type="InterPro" id="IPR006195">
    <property type="entry name" value="aa-tRNA-synth_II"/>
</dbReference>
<dbReference type="InterPro" id="IPR045864">
    <property type="entry name" value="aa-tRNA-synth_II/BPL/LPL"/>
</dbReference>
<dbReference type="InterPro" id="IPR004154">
    <property type="entry name" value="Anticodon-bd"/>
</dbReference>
<dbReference type="InterPro" id="IPR036621">
    <property type="entry name" value="Anticodon-bd_dom_sf"/>
</dbReference>
<dbReference type="InterPro" id="IPR023509">
    <property type="entry name" value="DTD-like_sf"/>
</dbReference>
<dbReference type="InterPro" id="IPR002320">
    <property type="entry name" value="Thr-tRNA-ligase_IIa"/>
</dbReference>
<dbReference type="InterPro" id="IPR015011">
    <property type="entry name" value="Threonyl-tRNA_syn_edit_dom_arc"/>
</dbReference>
<dbReference type="InterPro" id="IPR047246">
    <property type="entry name" value="ThrRS_anticodon"/>
</dbReference>
<dbReference type="NCBIfam" id="NF003068">
    <property type="entry name" value="PRK03991.1"/>
    <property type="match status" value="1"/>
</dbReference>
<dbReference type="NCBIfam" id="TIGR00418">
    <property type="entry name" value="thrS"/>
    <property type="match status" value="1"/>
</dbReference>
<dbReference type="PANTHER" id="PTHR11451:SF44">
    <property type="entry name" value="THREONINE--TRNA LIGASE, CHLOROPLASTIC_MITOCHONDRIAL 2"/>
    <property type="match status" value="1"/>
</dbReference>
<dbReference type="PANTHER" id="PTHR11451">
    <property type="entry name" value="THREONINE-TRNA LIGASE"/>
    <property type="match status" value="1"/>
</dbReference>
<dbReference type="Pfam" id="PF03129">
    <property type="entry name" value="HGTP_anticodon"/>
    <property type="match status" value="1"/>
</dbReference>
<dbReference type="Pfam" id="PF00587">
    <property type="entry name" value="tRNA-synt_2b"/>
    <property type="match status" value="1"/>
</dbReference>
<dbReference type="Pfam" id="PF08915">
    <property type="entry name" value="tRNA-Thr_ED"/>
    <property type="match status" value="1"/>
</dbReference>
<dbReference type="PRINTS" id="PR01047">
    <property type="entry name" value="TRNASYNTHTHR"/>
</dbReference>
<dbReference type="SUPFAM" id="SSF52954">
    <property type="entry name" value="Class II aaRS ABD-related"/>
    <property type="match status" value="1"/>
</dbReference>
<dbReference type="SUPFAM" id="SSF55681">
    <property type="entry name" value="Class II aaRS and biotin synthetases"/>
    <property type="match status" value="1"/>
</dbReference>
<dbReference type="PROSITE" id="PS50862">
    <property type="entry name" value="AA_TRNA_LIGASE_II"/>
    <property type="match status" value="1"/>
</dbReference>
<sequence>MRILLIHSDYLNYNVKNKTPVAEEIEDAKKQGAFDESLVVFTAVEKDDENNPQGIVKNLVKEVIKTNDQVKAENIVLYPYAHLSSSLSSPKVAVQVLKDAEEALDAEGLNVKRVPFGWYKAFEISCKGHPLSELSRTITAEEEEEEEVEKKPSSWSILDGDKIIDIDDFKFENDQLEKLVSYELGTGASDAGEPPHVKLMREKELCDYESASDVGNLKWFPKGRLVRDLLADYVYNLVVDQGAMPIETPIFYDLDNEAINVHAAKFGERQYRTDTKKNLMLRFACCFGAFRVMADPFITWKNLPAKLYELSTYSFRFEKKGEVVGLKRLRAFTMPDFHSFCADMNSTLEEFSKQTDMCIQTGVDLDVNYEIIFRATKDFYDENKDWMYSIGKKIGKPVLLEILPERKHYWSCKIDFAAIDYLGRPIENPTVQIDVESGKRFDITYLGEDGKEHYPTILHCSPTGSIERVICSLLEKTAIELDEKAPMLPTWLSPIEVRIITVGEDHKDFANELYDKINAENIRVDVDDRDESVGKKIRNAATEWIPYIFVVGDNEKESGVFSVTVRETGEKVDMTVDELIKEILDKTKGMPYRGLPLPKDISTRINFQ</sequence>
<gene>
    <name evidence="1" type="primary">thrS</name>
    <name type="ordered locus">Msm_1214</name>
</gene>
<comment type="function">
    <text evidence="1">Catalyzes the attachment of threonine to tRNA(Thr) in a two-step reaction: L-threonine is first activated by ATP to form Thr-AMP and then transferred to the acceptor end of tRNA(Thr). Also edits incorrectly charged L-seryl-tRNA(Thr).</text>
</comment>
<comment type="catalytic activity">
    <reaction evidence="1">
        <text>tRNA(Thr) + L-threonine + ATP = L-threonyl-tRNA(Thr) + AMP + diphosphate + H(+)</text>
        <dbReference type="Rhea" id="RHEA:24624"/>
        <dbReference type="Rhea" id="RHEA-COMP:9670"/>
        <dbReference type="Rhea" id="RHEA-COMP:9704"/>
        <dbReference type="ChEBI" id="CHEBI:15378"/>
        <dbReference type="ChEBI" id="CHEBI:30616"/>
        <dbReference type="ChEBI" id="CHEBI:33019"/>
        <dbReference type="ChEBI" id="CHEBI:57926"/>
        <dbReference type="ChEBI" id="CHEBI:78442"/>
        <dbReference type="ChEBI" id="CHEBI:78534"/>
        <dbReference type="ChEBI" id="CHEBI:456215"/>
        <dbReference type="EC" id="6.1.1.3"/>
    </reaction>
</comment>
<comment type="cofactor">
    <cofactor evidence="1">
        <name>Zn(2+)</name>
        <dbReference type="ChEBI" id="CHEBI:29105"/>
    </cofactor>
    <text evidence="1">Binds 1 zinc ion per subunit.</text>
</comment>
<comment type="subunit">
    <text evidence="1">Homodimer.</text>
</comment>
<comment type="subcellular location">
    <subcellularLocation>
        <location evidence="1">Cytoplasm</location>
    </subcellularLocation>
</comment>
<comment type="domain">
    <text evidence="1">The N-terminal domain is an archaea-specific tRNA-editing domain that hydrolyzes incorrectly charged L-seryl-tRNA(Thr). Catalysis of tRNA editing is performed by the charged tRNA itself.</text>
</comment>
<comment type="similarity">
    <text evidence="1">Belongs to the class-II aminoacyl-tRNA synthetase family.</text>
</comment>
<protein>
    <recommendedName>
        <fullName evidence="1">Threonine--tRNA ligase</fullName>
        <ecNumber evidence="1">6.1.1.3</ecNumber>
    </recommendedName>
    <alternativeName>
        <fullName evidence="1">Threonyl-tRNA synthetase</fullName>
        <shortName evidence="1">ThrRS</shortName>
    </alternativeName>
</protein>
<feature type="chain" id="PRO_1000020434" description="Threonine--tRNA ligase">
    <location>
        <begin position="1"/>
        <end position="608"/>
    </location>
</feature>
<feature type="region of interest" description="Editing domain" evidence="1">
    <location>
        <begin position="1"/>
        <end position="144"/>
    </location>
</feature>
<feature type="region of interest" description="Catalytic" evidence="1">
    <location>
        <begin position="195"/>
        <end position="489"/>
    </location>
</feature>
<feature type="binding site" evidence="1">
    <location>
        <position position="286"/>
    </location>
    <ligand>
        <name>Zn(2+)</name>
        <dbReference type="ChEBI" id="CHEBI:29105"/>
    </ligand>
</feature>
<feature type="binding site" evidence="1">
    <location>
        <position position="338"/>
    </location>
    <ligand>
        <name>Zn(2+)</name>
        <dbReference type="ChEBI" id="CHEBI:29105"/>
    </ligand>
</feature>
<feature type="binding site" evidence="1">
    <location>
        <position position="459"/>
    </location>
    <ligand>
        <name>Zn(2+)</name>
        <dbReference type="ChEBI" id="CHEBI:29105"/>
    </ligand>
</feature>
<reference key="1">
    <citation type="journal article" date="2007" name="Proc. Natl. Acad. Sci. U.S.A.">
        <title>Genomic and metabolic adaptations of Methanobrevibacter smithii to the human gut.</title>
        <authorList>
            <person name="Samuel B.S."/>
            <person name="Hansen E.E."/>
            <person name="Manchester J.K."/>
            <person name="Coutinho P.M."/>
            <person name="Henrissat B."/>
            <person name="Fulton R."/>
            <person name="Latreille P."/>
            <person name="Kim K."/>
            <person name="Wilson R.K."/>
            <person name="Gordon J.I."/>
        </authorList>
    </citation>
    <scope>NUCLEOTIDE SEQUENCE [LARGE SCALE GENOMIC DNA]</scope>
    <source>
        <strain>ATCC 35061 / DSM 861 / OCM 144 / PS</strain>
    </source>
</reference>
<keyword id="KW-0030">Aminoacyl-tRNA synthetase</keyword>
<keyword id="KW-0067">ATP-binding</keyword>
<keyword id="KW-0963">Cytoplasm</keyword>
<keyword id="KW-0436">Ligase</keyword>
<keyword id="KW-0479">Metal-binding</keyword>
<keyword id="KW-0547">Nucleotide-binding</keyword>
<keyword id="KW-0648">Protein biosynthesis</keyword>
<keyword id="KW-0694">RNA-binding</keyword>
<keyword id="KW-0820">tRNA-binding</keyword>
<keyword id="KW-0862">Zinc</keyword>